<evidence type="ECO:0000255" key="1">
    <source>
        <dbReference type="HAMAP-Rule" id="MF_01331"/>
    </source>
</evidence>
<evidence type="ECO:0000305" key="2"/>
<feature type="chain" id="PRO_0000243213" description="Large ribosomal subunit protein uL22">
    <location>
        <begin position="1"/>
        <end position="114"/>
    </location>
</feature>
<gene>
    <name evidence="1" type="primary">rplV</name>
    <name type="ordered locus">stu1929</name>
</gene>
<sequence>MAEITSAKAMARTVRVSPRKTRLVLDLIRGKNVADAIAILKFTPNKAARIVEKTLNSAIANAENNFGLEKANLVVSETFANEGPTMKRFRPRAKGSASPINKRTTHVTVVVSEK</sequence>
<dbReference type="EMBL" id="CP000023">
    <property type="protein sequence ID" value="AAV61527.1"/>
    <property type="molecule type" value="Genomic_DNA"/>
</dbReference>
<dbReference type="RefSeq" id="WP_002887063.1">
    <property type="nucleotide sequence ID" value="NC_006448.1"/>
</dbReference>
<dbReference type="SMR" id="Q5M2B8"/>
<dbReference type="STRING" id="264199.stu1929"/>
<dbReference type="GeneID" id="93793081"/>
<dbReference type="KEGG" id="stl:stu1929"/>
<dbReference type="eggNOG" id="COG0091">
    <property type="taxonomic scope" value="Bacteria"/>
</dbReference>
<dbReference type="HOGENOM" id="CLU_083987_3_3_9"/>
<dbReference type="Proteomes" id="UP000001170">
    <property type="component" value="Chromosome"/>
</dbReference>
<dbReference type="GO" id="GO:0022625">
    <property type="term" value="C:cytosolic large ribosomal subunit"/>
    <property type="evidence" value="ECO:0007669"/>
    <property type="project" value="TreeGrafter"/>
</dbReference>
<dbReference type="GO" id="GO:0019843">
    <property type="term" value="F:rRNA binding"/>
    <property type="evidence" value="ECO:0007669"/>
    <property type="project" value="UniProtKB-UniRule"/>
</dbReference>
<dbReference type="GO" id="GO:0003735">
    <property type="term" value="F:structural constituent of ribosome"/>
    <property type="evidence" value="ECO:0007669"/>
    <property type="project" value="InterPro"/>
</dbReference>
<dbReference type="GO" id="GO:0006412">
    <property type="term" value="P:translation"/>
    <property type="evidence" value="ECO:0007669"/>
    <property type="project" value="UniProtKB-UniRule"/>
</dbReference>
<dbReference type="CDD" id="cd00336">
    <property type="entry name" value="Ribosomal_L22"/>
    <property type="match status" value="1"/>
</dbReference>
<dbReference type="FunFam" id="3.90.470.10:FF:000001">
    <property type="entry name" value="50S ribosomal protein L22"/>
    <property type="match status" value="1"/>
</dbReference>
<dbReference type="Gene3D" id="3.90.470.10">
    <property type="entry name" value="Ribosomal protein L22/L17"/>
    <property type="match status" value="1"/>
</dbReference>
<dbReference type="HAMAP" id="MF_01331_B">
    <property type="entry name" value="Ribosomal_uL22_B"/>
    <property type="match status" value="1"/>
</dbReference>
<dbReference type="InterPro" id="IPR001063">
    <property type="entry name" value="Ribosomal_uL22"/>
</dbReference>
<dbReference type="InterPro" id="IPR005727">
    <property type="entry name" value="Ribosomal_uL22_bac/chlpt-type"/>
</dbReference>
<dbReference type="InterPro" id="IPR047867">
    <property type="entry name" value="Ribosomal_uL22_bac/org-type"/>
</dbReference>
<dbReference type="InterPro" id="IPR018260">
    <property type="entry name" value="Ribosomal_uL22_CS"/>
</dbReference>
<dbReference type="InterPro" id="IPR036394">
    <property type="entry name" value="Ribosomal_uL22_sf"/>
</dbReference>
<dbReference type="NCBIfam" id="TIGR01044">
    <property type="entry name" value="rplV_bact"/>
    <property type="match status" value="1"/>
</dbReference>
<dbReference type="PANTHER" id="PTHR13501">
    <property type="entry name" value="CHLOROPLAST 50S RIBOSOMAL PROTEIN L22-RELATED"/>
    <property type="match status" value="1"/>
</dbReference>
<dbReference type="PANTHER" id="PTHR13501:SF8">
    <property type="entry name" value="LARGE RIBOSOMAL SUBUNIT PROTEIN UL22M"/>
    <property type="match status" value="1"/>
</dbReference>
<dbReference type="Pfam" id="PF00237">
    <property type="entry name" value="Ribosomal_L22"/>
    <property type="match status" value="1"/>
</dbReference>
<dbReference type="SUPFAM" id="SSF54843">
    <property type="entry name" value="Ribosomal protein L22"/>
    <property type="match status" value="1"/>
</dbReference>
<dbReference type="PROSITE" id="PS00464">
    <property type="entry name" value="RIBOSOMAL_L22"/>
    <property type="match status" value="1"/>
</dbReference>
<organism>
    <name type="scientific">Streptococcus thermophilus (strain ATCC BAA-250 / LMG 18311)</name>
    <dbReference type="NCBI Taxonomy" id="264199"/>
    <lineage>
        <taxon>Bacteria</taxon>
        <taxon>Bacillati</taxon>
        <taxon>Bacillota</taxon>
        <taxon>Bacilli</taxon>
        <taxon>Lactobacillales</taxon>
        <taxon>Streptococcaceae</taxon>
        <taxon>Streptococcus</taxon>
    </lineage>
</organism>
<accession>Q5M2B8</accession>
<name>RL22_STRT2</name>
<proteinExistence type="inferred from homology"/>
<reference key="1">
    <citation type="journal article" date="2004" name="Nat. Biotechnol.">
        <title>Complete sequence and comparative genome analysis of the dairy bacterium Streptococcus thermophilus.</title>
        <authorList>
            <person name="Bolotin A."/>
            <person name="Quinquis B."/>
            <person name="Renault P."/>
            <person name="Sorokin A."/>
            <person name="Ehrlich S.D."/>
            <person name="Kulakauskas S."/>
            <person name="Lapidus A."/>
            <person name="Goltsman E."/>
            <person name="Mazur M."/>
            <person name="Pusch G.D."/>
            <person name="Fonstein M."/>
            <person name="Overbeek R."/>
            <person name="Kyprides N."/>
            <person name="Purnelle B."/>
            <person name="Prozzi D."/>
            <person name="Ngui K."/>
            <person name="Masuy D."/>
            <person name="Hancy F."/>
            <person name="Burteau S."/>
            <person name="Boutry M."/>
            <person name="Delcour J."/>
            <person name="Goffeau A."/>
            <person name="Hols P."/>
        </authorList>
    </citation>
    <scope>NUCLEOTIDE SEQUENCE [LARGE SCALE GENOMIC DNA]</scope>
    <source>
        <strain>ATCC BAA-250 / LMG 18311</strain>
    </source>
</reference>
<comment type="function">
    <text evidence="1">This protein binds specifically to 23S rRNA; its binding is stimulated by other ribosomal proteins, e.g. L4, L17, and L20. It is important during the early stages of 50S assembly. It makes multiple contacts with different domains of the 23S rRNA in the assembled 50S subunit and ribosome (By similarity).</text>
</comment>
<comment type="function">
    <text evidence="1">The globular domain of the protein is located near the polypeptide exit tunnel on the outside of the subunit, while an extended beta-hairpin is found that lines the wall of the exit tunnel in the center of the 70S ribosome.</text>
</comment>
<comment type="subunit">
    <text evidence="1">Part of the 50S ribosomal subunit.</text>
</comment>
<comment type="similarity">
    <text evidence="1">Belongs to the universal ribosomal protein uL22 family.</text>
</comment>
<keyword id="KW-1185">Reference proteome</keyword>
<keyword id="KW-0687">Ribonucleoprotein</keyword>
<keyword id="KW-0689">Ribosomal protein</keyword>
<keyword id="KW-0694">RNA-binding</keyword>
<keyword id="KW-0699">rRNA-binding</keyword>
<protein>
    <recommendedName>
        <fullName evidence="1">Large ribosomal subunit protein uL22</fullName>
    </recommendedName>
    <alternativeName>
        <fullName evidence="2">50S ribosomal protein L22</fullName>
    </alternativeName>
</protein>